<proteinExistence type="evidence at transcript level"/>
<sequence>MKKQKGYLVFDIGTGNARVAVVSVTGSVLTVEREDIEYSTETLYPDSRYFSPQVLWKQVMNLAKRALSRSCDIDIIGLTSTSQRQGIVLIDQNGNPFLGLPNIDNRGREWEAGIPDWEEIYSSTGRLPTALFSALKLYGLKQRQPSLWEKTASFTSISDWVTYQLSGILTYEPSQATETLLFDVKQNTWSEEMCDIFGFSPSILPPLVRAGTAIGTIANEYASELGLSINAKVIAGGGDTQLAVKSTGAGLEDIVIVSGTTTPITKITEDHGDTKHKAWLNCHTDQGHWLVETNPGITGLNYQKLKQIFYPNETYEVMEEEISALAKEDHACVAALGSYLSAEKNALTRGGFLFDAPLSAHLKRAHFVRAALEEIAFSIKWNFDILTEVTPFERDYVWVCGGGFQSKALTQYIADLLQKKVYVQEGYHQASVVGAAVICNETFQLTEEMSANVRVIEPKDCQIELALYEEWKQTQRFFSGSESKVLI</sequence>
<keyword id="KW-0418">Kinase</keyword>
<keyword id="KW-1185">Reference proteome</keyword>
<keyword id="KW-0808">Transferase</keyword>
<gene>
    <name type="primary">yoaC</name>
    <name type="ordered locus">BSU18550</name>
</gene>
<protein>
    <recommendedName>
        <fullName>Putative sugar kinase YoaC</fullName>
        <ecNumber>2.7.1.-</ecNumber>
    </recommendedName>
</protein>
<accession>O34861</accession>
<accession>Q796G1</accession>
<name>YOAC_BACSU</name>
<evidence type="ECO:0000269" key="1">
    <source>
    </source>
</evidence>
<evidence type="ECO:0000305" key="2"/>
<reference key="1">
    <citation type="submission" date="1997-10" db="EMBL/GenBank/DDBJ databases">
        <title>Sequence analysis of the Bacillus subtilis chromosome region between the terC and odhAB loci cloned in a yeast artificial chromosome.</title>
        <authorList>
            <person name="Lapidus A."/>
            <person name="Galleron N."/>
            <person name="Sorokin A."/>
            <person name="Ehrlich D."/>
        </authorList>
    </citation>
    <scope>NUCLEOTIDE SEQUENCE [GENOMIC DNA]</scope>
</reference>
<reference key="2">
    <citation type="journal article" date="1997" name="Nature">
        <title>The complete genome sequence of the Gram-positive bacterium Bacillus subtilis.</title>
        <authorList>
            <person name="Kunst F."/>
            <person name="Ogasawara N."/>
            <person name="Moszer I."/>
            <person name="Albertini A.M."/>
            <person name="Alloni G."/>
            <person name="Azevedo V."/>
            <person name="Bertero M.G."/>
            <person name="Bessieres P."/>
            <person name="Bolotin A."/>
            <person name="Borchert S."/>
            <person name="Borriss R."/>
            <person name="Boursier L."/>
            <person name="Brans A."/>
            <person name="Braun M."/>
            <person name="Brignell S.C."/>
            <person name="Bron S."/>
            <person name="Brouillet S."/>
            <person name="Bruschi C.V."/>
            <person name="Caldwell B."/>
            <person name="Capuano V."/>
            <person name="Carter N.M."/>
            <person name="Choi S.-K."/>
            <person name="Codani J.-J."/>
            <person name="Connerton I.F."/>
            <person name="Cummings N.J."/>
            <person name="Daniel R.A."/>
            <person name="Denizot F."/>
            <person name="Devine K.M."/>
            <person name="Duesterhoeft A."/>
            <person name="Ehrlich S.D."/>
            <person name="Emmerson P.T."/>
            <person name="Entian K.-D."/>
            <person name="Errington J."/>
            <person name="Fabret C."/>
            <person name="Ferrari E."/>
            <person name="Foulger D."/>
            <person name="Fritz C."/>
            <person name="Fujita M."/>
            <person name="Fujita Y."/>
            <person name="Fuma S."/>
            <person name="Galizzi A."/>
            <person name="Galleron N."/>
            <person name="Ghim S.-Y."/>
            <person name="Glaser P."/>
            <person name="Goffeau A."/>
            <person name="Golightly E.J."/>
            <person name="Grandi G."/>
            <person name="Guiseppi G."/>
            <person name="Guy B.J."/>
            <person name="Haga K."/>
            <person name="Haiech J."/>
            <person name="Harwood C.R."/>
            <person name="Henaut A."/>
            <person name="Hilbert H."/>
            <person name="Holsappel S."/>
            <person name="Hosono S."/>
            <person name="Hullo M.-F."/>
            <person name="Itaya M."/>
            <person name="Jones L.-M."/>
            <person name="Joris B."/>
            <person name="Karamata D."/>
            <person name="Kasahara Y."/>
            <person name="Klaerr-Blanchard M."/>
            <person name="Klein C."/>
            <person name="Kobayashi Y."/>
            <person name="Koetter P."/>
            <person name="Koningstein G."/>
            <person name="Krogh S."/>
            <person name="Kumano M."/>
            <person name="Kurita K."/>
            <person name="Lapidus A."/>
            <person name="Lardinois S."/>
            <person name="Lauber J."/>
            <person name="Lazarevic V."/>
            <person name="Lee S.-M."/>
            <person name="Levine A."/>
            <person name="Liu H."/>
            <person name="Masuda S."/>
            <person name="Mauel C."/>
            <person name="Medigue C."/>
            <person name="Medina N."/>
            <person name="Mellado R.P."/>
            <person name="Mizuno M."/>
            <person name="Moestl D."/>
            <person name="Nakai S."/>
            <person name="Noback M."/>
            <person name="Noone D."/>
            <person name="O'Reilly M."/>
            <person name="Ogawa K."/>
            <person name="Ogiwara A."/>
            <person name="Oudega B."/>
            <person name="Park S.-H."/>
            <person name="Parro V."/>
            <person name="Pohl T.M."/>
            <person name="Portetelle D."/>
            <person name="Porwollik S."/>
            <person name="Prescott A.M."/>
            <person name="Presecan E."/>
            <person name="Pujic P."/>
            <person name="Purnelle B."/>
            <person name="Rapoport G."/>
            <person name="Rey M."/>
            <person name="Reynolds S."/>
            <person name="Rieger M."/>
            <person name="Rivolta C."/>
            <person name="Rocha E."/>
            <person name="Roche B."/>
            <person name="Rose M."/>
            <person name="Sadaie Y."/>
            <person name="Sato T."/>
            <person name="Scanlan E."/>
            <person name="Schleich S."/>
            <person name="Schroeter R."/>
            <person name="Scoffone F."/>
            <person name="Sekiguchi J."/>
            <person name="Sekowska A."/>
            <person name="Seror S.J."/>
            <person name="Serror P."/>
            <person name="Shin B.-S."/>
            <person name="Soldo B."/>
            <person name="Sorokin A."/>
            <person name="Tacconi E."/>
            <person name="Takagi T."/>
            <person name="Takahashi H."/>
            <person name="Takemaru K."/>
            <person name="Takeuchi M."/>
            <person name="Tamakoshi A."/>
            <person name="Tanaka T."/>
            <person name="Terpstra P."/>
            <person name="Tognoni A."/>
            <person name="Tosato V."/>
            <person name="Uchiyama S."/>
            <person name="Vandenbol M."/>
            <person name="Vannier F."/>
            <person name="Vassarotti A."/>
            <person name="Viari A."/>
            <person name="Wambutt R."/>
            <person name="Wedler E."/>
            <person name="Wedler H."/>
            <person name="Weitzenegger T."/>
            <person name="Winters P."/>
            <person name="Wipat A."/>
            <person name="Yamamoto H."/>
            <person name="Yamane K."/>
            <person name="Yasumoto K."/>
            <person name="Yata K."/>
            <person name="Yoshida K."/>
            <person name="Yoshikawa H.-F."/>
            <person name="Zumstein E."/>
            <person name="Yoshikawa H."/>
            <person name="Danchin A."/>
        </authorList>
    </citation>
    <scope>NUCLEOTIDE SEQUENCE [LARGE SCALE GENOMIC DNA]</scope>
    <source>
        <strain>168</strain>
    </source>
</reference>
<reference key="3">
    <citation type="journal article" date="2002" name="J. Bacteriol.">
        <title>Global expression profile of Bacillus subtilis grown in the presence of sulfate or methionine.</title>
        <authorList>
            <person name="Auger S."/>
            <person name="Danchin A."/>
            <person name="Martin-Verstraete I."/>
        </authorList>
    </citation>
    <scope>INDUCTION</scope>
    <scope>OPERON STRUCTURE</scope>
    <source>
        <strain>168</strain>
    </source>
</reference>
<organism>
    <name type="scientific">Bacillus subtilis (strain 168)</name>
    <dbReference type="NCBI Taxonomy" id="224308"/>
    <lineage>
        <taxon>Bacteria</taxon>
        <taxon>Bacillati</taxon>
        <taxon>Bacillota</taxon>
        <taxon>Bacilli</taxon>
        <taxon>Bacillales</taxon>
        <taxon>Bacillaceae</taxon>
        <taxon>Bacillus</taxon>
    </lineage>
</organism>
<feature type="chain" id="PRO_0000386539" description="Putative sugar kinase YoaC">
    <location>
        <begin position="1"/>
        <end position="487"/>
    </location>
</feature>
<dbReference type="EC" id="2.7.1.-"/>
<dbReference type="EMBL" id="AF027868">
    <property type="protein sequence ID" value="AAB84445.1"/>
    <property type="molecule type" value="Genomic_DNA"/>
</dbReference>
<dbReference type="EMBL" id="AL009126">
    <property type="protein sequence ID" value="CAB13748.1"/>
    <property type="molecule type" value="Genomic_DNA"/>
</dbReference>
<dbReference type="PIR" id="E69895">
    <property type="entry name" value="E69895"/>
</dbReference>
<dbReference type="RefSeq" id="NP_389737.1">
    <property type="nucleotide sequence ID" value="NC_000964.3"/>
</dbReference>
<dbReference type="RefSeq" id="WP_004399436.1">
    <property type="nucleotide sequence ID" value="NZ_OZ025638.1"/>
</dbReference>
<dbReference type="SMR" id="O34861"/>
<dbReference type="FunCoup" id="O34861">
    <property type="interactions" value="20"/>
</dbReference>
<dbReference type="IntAct" id="O34861">
    <property type="interactions" value="1"/>
</dbReference>
<dbReference type="MINT" id="O34861"/>
<dbReference type="STRING" id="224308.BSU18550"/>
<dbReference type="PaxDb" id="224308-BSU18550"/>
<dbReference type="EnsemblBacteria" id="CAB13748">
    <property type="protein sequence ID" value="CAB13748"/>
    <property type="gene ID" value="BSU_18550"/>
</dbReference>
<dbReference type="GeneID" id="940100"/>
<dbReference type="KEGG" id="bsu:BSU18550"/>
<dbReference type="PATRIC" id="fig|224308.179.peg.2022"/>
<dbReference type="eggNOG" id="COG1070">
    <property type="taxonomic scope" value="Bacteria"/>
</dbReference>
<dbReference type="InParanoid" id="O34861"/>
<dbReference type="OrthoDB" id="9805576at2"/>
<dbReference type="PhylomeDB" id="O34861"/>
<dbReference type="BioCyc" id="BSUB:BSU18550-MONOMER"/>
<dbReference type="Proteomes" id="UP000001570">
    <property type="component" value="Chromosome"/>
</dbReference>
<dbReference type="GO" id="GO:0016301">
    <property type="term" value="F:kinase activity"/>
    <property type="evidence" value="ECO:0007669"/>
    <property type="project" value="UniProtKB-KW"/>
</dbReference>
<dbReference type="GO" id="GO:0005975">
    <property type="term" value="P:carbohydrate metabolic process"/>
    <property type="evidence" value="ECO:0007669"/>
    <property type="project" value="InterPro"/>
</dbReference>
<dbReference type="CDD" id="cd07798">
    <property type="entry name" value="ASKHA_NBD_FGGY_YoaC-like"/>
    <property type="match status" value="1"/>
</dbReference>
<dbReference type="Gene3D" id="3.30.420.40">
    <property type="match status" value="2"/>
</dbReference>
<dbReference type="InterPro" id="IPR043129">
    <property type="entry name" value="ATPase_NBD"/>
</dbReference>
<dbReference type="InterPro" id="IPR000577">
    <property type="entry name" value="Carb_kinase_FGGY"/>
</dbReference>
<dbReference type="InterPro" id="IPR018485">
    <property type="entry name" value="FGGY_C"/>
</dbReference>
<dbReference type="InterPro" id="IPR050406">
    <property type="entry name" value="FGGY_Carb_Kinase"/>
</dbReference>
<dbReference type="InterPro" id="IPR018484">
    <property type="entry name" value="FGGY_N"/>
</dbReference>
<dbReference type="PANTHER" id="PTHR43095:SF2">
    <property type="entry name" value="GLUCONOKINASE"/>
    <property type="match status" value="1"/>
</dbReference>
<dbReference type="PANTHER" id="PTHR43095">
    <property type="entry name" value="SUGAR KINASE"/>
    <property type="match status" value="1"/>
</dbReference>
<dbReference type="Pfam" id="PF02782">
    <property type="entry name" value="FGGY_C"/>
    <property type="match status" value="1"/>
</dbReference>
<dbReference type="Pfam" id="PF00370">
    <property type="entry name" value="FGGY_N"/>
    <property type="match status" value="1"/>
</dbReference>
<dbReference type="PIRSF" id="PIRSF000538">
    <property type="entry name" value="GlpK"/>
    <property type="match status" value="1"/>
</dbReference>
<dbReference type="SUPFAM" id="SSF53067">
    <property type="entry name" value="Actin-like ATPase domain"/>
    <property type="match status" value="2"/>
</dbReference>
<comment type="induction">
    <text evidence="1">Induced by sulfate, part of the yoaDCB operon.</text>
</comment>
<comment type="similarity">
    <text evidence="2">Belongs to the FGGY kinase family.</text>
</comment>